<dbReference type="EC" id="3.1.21.10" evidence="1"/>
<dbReference type="EMBL" id="BX908798">
    <property type="protein sequence ID" value="CAF22743.1"/>
    <property type="molecule type" value="Genomic_DNA"/>
</dbReference>
<dbReference type="RefSeq" id="WP_011174569.1">
    <property type="nucleotide sequence ID" value="NC_005861.2"/>
</dbReference>
<dbReference type="SMR" id="Q6MFA6"/>
<dbReference type="STRING" id="264201.pc0019"/>
<dbReference type="KEGG" id="pcu:PC_RS00090"/>
<dbReference type="eggNOG" id="COG0817">
    <property type="taxonomic scope" value="Bacteria"/>
</dbReference>
<dbReference type="HOGENOM" id="CLU_091257_3_0_0"/>
<dbReference type="OrthoDB" id="9805499at2"/>
<dbReference type="Proteomes" id="UP000000529">
    <property type="component" value="Chromosome"/>
</dbReference>
<dbReference type="GO" id="GO:0005737">
    <property type="term" value="C:cytoplasm"/>
    <property type="evidence" value="ECO:0007669"/>
    <property type="project" value="UniProtKB-SubCell"/>
</dbReference>
<dbReference type="GO" id="GO:0048476">
    <property type="term" value="C:Holliday junction resolvase complex"/>
    <property type="evidence" value="ECO:0007669"/>
    <property type="project" value="UniProtKB-UniRule"/>
</dbReference>
<dbReference type="GO" id="GO:0008821">
    <property type="term" value="F:crossover junction DNA endonuclease activity"/>
    <property type="evidence" value="ECO:0007669"/>
    <property type="project" value="UniProtKB-UniRule"/>
</dbReference>
<dbReference type="GO" id="GO:0003677">
    <property type="term" value="F:DNA binding"/>
    <property type="evidence" value="ECO:0007669"/>
    <property type="project" value="UniProtKB-KW"/>
</dbReference>
<dbReference type="GO" id="GO:0000287">
    <property type="term" value="F:magnesium ion binding"/>
    <property type="evidence" value="ECO:0007669"/>
    <property type="project" value="UniProtKB-UniRule"/>
</dbReference>
<dbReference type="GO" id="GO:0006310">
    <property type="term" value="P:DNA recombination"/>
    <property type="evidence" value="ECO:0007669"/>
    <property type="project" value="UniProtKB-UniRule"/>
</dbReference>
<dbReference type="GO" id="GO:0006281">
    <property type="term" value="P:DNA repair"/>
    <property type="evidence" value="ECO:0007669"/>
    <property type="project" value="UniProtKB-UniRule"/>
</dbReference>
<dbReference type="CDD" id="cd16962">
    <property type="entry name" value="RuvC"/>
    <property type="match status" value="1"/>
</dbReference>
<dbReference type="FunFam" id="3.30.420.10:FF:000002">
    <property type="entry name" value="Crossover junction endodeoxyribonuclease RuvC"/>
    <property type="match status" value="1"/>
</dbReference>
<dbReference type="Gene3D" id="3.30.420.10">
    <property type="entry name" value="Ribonuclease H-like superfamily/Ribonuclease H"/>
    <property type="match status" value="1"/>
</dbReference>
<dbReference type="HAMAP" id="MF_00034">
    <property type="entry name" value="RuvC"/>
    <property type="match status" value="1"/>
</dbReference>
<dbReference type="InterPro" id="IPR012337">
    <property type="entry name" value="RNaseH-like_sf"/>
</dbReference>
<dbReference type="InterPro" id="IPR036397">
    <property type="entry name" value="RNaseH_sf"/>
</dbReference>
<dbReference type="InterPro" id="IPR020563">
    <property type="entry name" value="X-over_junc_endoDNase_Mg_BS"/>
</dbReference>
<dbReference type="InterPro" id="IPR002176">
    <property type="entry name" value="X-over_junc_endoDNase_RuvC"/>
</dbReference>
<dbReference type="NCBIfam" id="NF000711">
    <property type="entry name" value="PRK00039.2-1"/>
    <property type="match status" value="1"/>
</dbReference>
<dbReference type="NCBIfam" id="TIGR00228">
    <property type="entry name" value="ruvC"/>
    <property type="match status" value="1"/>
</dbReference>
<dbReference type="PANTHER" id="PTHR30194">
    <property type="entry name" value="CROSSOVER JUNCTION ENDODEOXYRIBONUCLEASE RUVC"/>
    <property type="match status" value="1"/>
</dbReference>
<dbReference type="PANTHER" id="PTHR30194:SF3">
    <property type="entry name" value="CROSSOVER JUNCTION ENDODEOXYRIBONUCLEASE RUVC"/>
    <property type="match status" value="1"/>
</dbReference>
<dbReference type="Pfam" id="PF02075">
    <property type="entry name" value="RuvC"/>
    <property type="match status" value="1"/>
</dbReference>
<dbReference type="PRINTS" id="PR00696">
    <property type="entry name" value="RSOLVASERUVC"/>
</dbReference>
<dbReference type="SUPFAM" id="SSF53098">
    <property type="entry name" value="Ribonuclease H-like"/>
    <property type="match status" value="1"/>
</dbReference>
<dbReference type="PROSITE" id="PS01321">
    <property type="entry name" value="RUVC"/>
    <property type="match status" value="1"/>
</dbReference>
<accession>Q6MFA6</accession>
<name>RUVC_PARUW</name>
<gene>
    <name evidence="1" type="primary">ruvC</name>
    <name type="ordered locus">pc0019</name>
</gene>
<reference key="1">
    <citation type="journal article" date="2004" name="Science">
        <title>Illuminating the evolutionary history of chlamydiae.</title>
        <authorList>
            <person name="Horn M."/>
            <person name="Collingro A."/>
            <person name="Schmitz-Esser S."/>
            <person name="Beier C.L."/>
            <person name="Purkhold U."/>
            <person name="Fartmann B."/>
            <person name="Brandt P."/>
            <person name="Nyakatura G.J."/>
            <person name="Droege M."/>
            <person name="Frishman D."/>
            <person name="Rattei T."/>
            <person name="Mewes H.-W."/>
            <person name="Wagner M."/>
        </authorList>
    </citation>
    <scope>NUCLEOTIDE SEQUENCE [LARGE SCALE GENOMIC DNA]</scope>
    <source>
        <strain>UWE25</strain>
    </source>
</reference>
<proteinExistence type="inferred from homology"/>
<comment type="function">
    <text evidence="1">The RuvA-RuvB-RuvC complex processes Holliday junction (HJ) DNA during genetic recombination and DNA repair. Endonuclease that resolves HJ intermediates. Cleaves cruciform DNA by making single-stranded nicks across the HJ at symmetrical positions within the homologous arms, yielding a 5'-phosphate and a 3'-hydroxyl group; requires a central core of homology in the junction. The consensus cleavage sequence is 5'-(A/T)TT(C/G)-3'. Cleavage occurs on the 3'-side of the TT dinucleotide at the point of strand exchange. HJ branch migration catalyzed by RuvA-RuvB allows RuvC to scan DNA until it finds its consensus sequence, where it cleaves and resolves the cruciform DNA.</text>
</comment>
<comment type="catalytic activity">
    <reaction evidence="1">
        <text>Endonucleolytic cleavage at a junction such as a reciprocal single-stranded crossover between two homologous DNA duplexes (Holliday junction).</text>
        <dbReference type="EC" id="3.1.21.10"/>
    </reaction>
</comment>
<comment type="cofactor">
    <cofactor evidence="1">
        <name>Mg(2+)</name>
        <dbReference type="ChEBI" id="CHEBI:18420"/>
    </cofactor>
    <text evidence="1">Binds 2 Mg(2+) ion per subunit.</text>
</comment>
<comment type="subunit">
    <text evidence="1">Homodimer which binds Holliday junction (HJ) DNA. The HJ becomes 2-fold symmetrical on binding to RuvC with unstacked arms; it has a different conformation from HJ DNA in complex with RuvA. In the full resolvosome a probable DNA-RuvA(4)-RuvB(12)-RuvC(2) complex forms which resolves the HJ.</text>
</comment>
<comment type="subcellular location">
    <subcellularLocation>
        <location evidence="1">Cytoplasm</location>
    </subcellularLocation>
</comment>
<comment type="similarity">
    <text evidence="1">Belongs to the RuvC family.</text>
</comment>
<protein>
    <recommendedName>
        <fullName evidence="1">Crossover junction endodeoxyribonuclease RuvC</fullName>
        <ecNumber evidence="1">3.1.21.10</ecNumber>
    </recommendedName>
    <alternativeName>
        <fullName evidence="1">Holliday junction nuclease RuvC</fullName>
    </alternativeName>
    <alternativeName>
        <fullName evidence="1">Holliday junction resolvase RuvC</fullName>
    </alternativeName>
</protein>
<feature type="chain" id="PRO_0000225158" description="Crossover junction endodeoxyribonuclease RuvC">
    <location>
        <begin position="1"/>
        <end position="168"/>
    </location>
</feature>
<feature type="active site" evidence="1">
    <location>
        <position position="11"/>
    </location>
</feature>
<feature type="active site" evidence="1">
    <location>
        <position position="71"/>
    </location>
</feature>
<feature type="active site" evidence="1">
    <location>
        <position position="144"/>
    </location>
</feature>
<feature type="binding site" evidence="1">
    <location>
        <position position="11"/>
    </location>
    <ligand>
        <name>Mg(2+)</name>
        <dbReference type="ChEBI" id="CHEBI:18420"/>
        <label>1</label>
    </ligand>
</feature>
<feature type="binding site" evidence="1">
    <location>
        <position position="71"/>
    </location>
    <ligand>
        <name>Mg(2+)</name>
        <dbReference type="ChEBI" id="CHEBI:18420"/>
        <label>2</label>
    </ligand>
</feature>
<feature type="binding site" evidence="1">
    <location>
        <position position="144"/>
    </location>
    <ligand>
        <name>Mg(2+)</name>
        <dbReference type="ChEBI" id="CHEBI:18420"/>
        <label>1</label>
    </ligand>
</feature>
<keyword id="KW-0963">Cytoplasm</keyword>
<keyword id="KW-0227">DNA damage</keyword>
<keyword id="KW-0233">DNA recombination</keyword>
<keyword id="KW-0234">DNA repair</keyword>
<keyword id="KW-0238">DNA-binding</keyword>
<keyword id="KW-0255">Endonuclease</keyword>
<keyword id="KW-0378">Hydrolase</keyword>
<keyword id="KW-0460">Magnesium</keyword>
<keyword id="KW-0479">Metal-binding</keyword>
<keyword id="KW-0540">Nuclease</keyword>
<keyword id="KW-1185">Reference proteome</keyword>
<sequence>MSNQVIILGLDPGTKITGFGVIRIEGHQYVPVDYGCIRPPSHYKLSERYLVICQGVEQLIDQHQPHAVVVETQYVSKNVQSAMKLGMARGVIMIAAKKRGIPIYEYAPSKAKLAVVGTGRASKYQVQGMVQRLLNLSIPPTPEDAADALALAICHAQMPILKQSQYET</sequence>
<evidence type="ECO:0000255" key="1">
    <source>
        <dbReference type="HAMAP-Rule" id="MF_00034"/>
    </source>
</evidence>
<organism>
    <name type="scientific">Protochlamydia amoebophila (strain UWE25)</name>
    <dbReference type="NCBI Taxonomy" id="264201"/>
    <lineage>
        <taxon>Bacteria</taxon>
        <taxon>Pseudomonadati</taxon>
        <taxon>Chlamydiota</taxon>
        <taxon>Chlamydiia</taxon>
        <taxon>Parachlamydiales</taxon>
        <taxon>Parachlamydiaceae</taxon>
        <taxon>Candidatus Protochlamydia</taxon>
    </lineage>
</organism>